<gene>
    <name evidence="1" type="primary">rpmE</name>
    <name type="ordered locus">Amet_0324</name>
</gene>
<sequence length="65" mass="7451">MKKDIHPAYQQIDVHCVCGNKFKTGSTNKEIRVEVCSDCHPFYTGKQKSVEKGGRVEKFKKKFGM</sequence>
<evidence type="ECO:0000255" key="1">
    <source>
        <dbReference type="HAMAP-Rule" id="MF_00501"/>
    </source>
</evidence>
<evidence type="ECO:0000305" key="2"/>
<accession>A6TK36</accession>
<comment type="function">
    <text evidence="1">Binds the 23S rRNA.</text>
</comment>
<comment type="cofactor">
    <cofactor evidence="1">
        <name>Zn(2+)</name>
        <dbReference type="ChEBI" id="CHEBI:29105"/>
    </cofactor>
    <text evidence="1">Binds 1 zinc ion per subunit.</text>
</comment>
<comment type="subunit">
    <text evidence="1">Part of the 50S ribosomal subunit.</text>
</comment>
<comment type="similarity">
    <text evidence="1">Belongs to the bacterial ribosomal protein bL31 family. Type A subfamily.</text>
</comment>
<name>RL31_ALKMQ</name>
<dbReference type="EMBL" id="CP000724">
    <property type="protein sequence ID" value="ABR46554.1"/>
    <property type="molecule type" value="Genomic_DNA"/>
</dbReference>
<dbReference type="RefSeq" id="WP_011971462.1">
    <property type="nucleotide sequence ID" value="NC_009633.1"/>
</dbReference>
<dbReference type="SMR" id="A6TK36"/>
<dbReference type="STRING" id="293826.Amet_0324"/>
<dbReference type="KEGG" id="amt:Amet_0324"/>
<dbReference type="eggNOG" id="COG0254">
    <property type="taxonomic scope" value="Bacteria"/>
</dbReference>
<dbReference type="HOGENOM" id="CLU_114306_4_3_9"/>
<dbReference type="OrthoDB" id="9803251at2"/>
<dbReference type="Proteomes" id="UP000001572">
    <property type="component" value="Chromosome"/>
</dbReference>
<dbReference type="GO" id="GO:1990904">
    <property type="term" value="C:ribonucleoprotein complex"/>
    <property type="evidence" value="ECO:0007669"/>
    <property type="project" value="UniProtKB-KW"/>
</dbReference>
<dbReference type="GO" id="GO:0005840">
    <property type="term" value="C:ribosome"/>
    <property type="evidence" value="ECO:0007669"/>
    <property type="project" value="UniProtKB-KW"/>
</dbReference>
<dbReference type="GO" id="GO:0046872">
    <property type="term" value="F:metal ion binding"/>
    <property type="evidence" value="ECO:0007669"/>
    <property type="project" value="UniProtKB-KW"/>
</dbReference>
<dbReference type="GO" id="GO:0019843">
    <property type="term" value="F:rRNA binding"/>
    <property type="evidence" value="ECO:0007669"/>
    <property type="project" value="UniProtKB-KW"/>
</dbReference>
<dbReference type="GO" id="GO:0003735">
    <property type="term" value="F:structural constituent of ribosome"/>
    <property type="evidence" value="ECO:0007669"/>
    <property type="project" value="InterPro"/>
</dbReference>
<dbReference type="GO" id="GO:0006412">
    <property type="term" value="P:translation"/>
    <property type="evidence" value="ECO:0007669"/>
    <property type="project" value="UniProtKB-UniRule"/>
</dbReference>
<dbReference type="Gene3D" id="4.10.830.30">
    <property type="entry name" value="Ribosomal protein L31"/>
    <property type="match status" value="1"/>
</dbReference>
<dbReference type="HAMAP" id="MF_00501">
    <property type="entry name" value="Ribosomal_bL31_1"/>
    <property type="match status" value="1"/>
</dbReference>
<dbReference type="InterPro" id="IPR034704">
    <property type="entry name" value="Ribosomal_bL28/bL31-like_sf"/>
</dbReference>
<dbReference type="InterPro" id="IPR002150">
    <property type="entry name" value="Ribosomal_bL31"/>
</dbReference>
<dbReference type="InterPro" id="IPR027491">
    <property type="entry name" value="Ribosomal_bL31_A"/>
</dbReference>
<dbReference type="InterPro" id="IPR042105">
    <property type="entry name" value="Ribosomal_bL31_sf"/>
</dbReference>
<dbReference type="NCBIfam" id="TIGR00105">
    <property type="entry name" value="L31"/>
    <property type="match status" value="1"/>
</dbReference>
<dbReference type="NCBIfam" id="NF000612">
    <property type="entry name" value="PRK00019.1"/>
    <property type="match status" value="1"/>
</dbReference>
<dbReference type="NCBIfam" id="NF001809">
    <property type="entry name" value="PRK00528.1"/>
    <property type="match status" value="1"/>
</dbReference>
<dbReference type="PANTHER" id="PTHR33280">
    <property type="entry name" value="50S RIBOSOMAL PROTEIN L31, CHLOROPLASTIC"/>
    <property type="match status" value="1"/>
</dbReference>
<dbReference type="PANTHER" id="PTHR33280:SF1">
    <property type="entry name" value="LARGE RIBOSOMAL SUBUNIT PROTEIN BL31C"/>
    <property type="match status" value="1"/>
</dbReference>
<dbReference type="Pfam" id="PF01197">
    <property type="entry name" value="Ribosomal_L31"/>
    <property type="match status" value="1"/>
</dbReference>
<dbReference type="PRINTS" id="PR01249">
    <property type="entry name" value="RIBOSOMALL31"/>
</dbReference>
<dbReference type="SUPFAM" id="SSF143800">
    <property type="entry name" value="L28p-like"/>
    <property type="match status" value="1"/>
</dbReference>
<dbReference type="PROSITE" id="PS01143">
    <property type="entry name" value="RIBOSOMAL_L31"/>
    <property type="match status" value="1"/>
</dbReference>
<protein>
    <recommendedName>
        <fullName evidence="1">Large ribosomal subunit protein bL31</fullName>
    </recommendedName>
    <alternativeName>
        <fullName evidence="2">50S ribosomal protein L31</fullName>
    </alternativeName>
</protein>
<proteinExistence type="inferred from homology"/>
<keyword id="KW-0479">Metal-binding</keyword>
<keyword id="KW-1185">Reference proteome</keyword>
<keyword id="KW-0687">Ribonucleoprotein</keyword>
<keyword id="KW-0689">Ribosomal protein</keyword>
<keyword id="KW-0694">RNA-binding</keyword>
<keyword id="KW-0699">rRNA-binding</keyword>
<keyword id="KW-0862">Zinc</keyword>
<feature type="chain" id="PRO_1000126557" description="Large ribosomal subunit protein bL31">
    <location>
        <begin position="1"/>
        <end position="65"/>
    </location>
</feature>
<feature type="binding site" evidence="1">
    <location>
        <position position="16"/>
    </location>
    <ligand>
        <name>Zn(2+)</name>
        <dbReference type="ChEBI" id="CHEBI:29105"/>
    </ligand>
</feature>
<feature type="binding site" evidence="1">
    <location>
        <position position="18"/>
    </location>
    <ligand>
        <name>Zn(2+)</name>
        <dbReference type="ChEBI" id="CHEBI:29105"/>
    </ligand>
</feature>
<feature type="binding site" evidence="1">
    <location>
        <position position="36"/>
    </location>
    <ligand>
        <name>Zn(2+)</name>
        <dbReference type="ChEBI" id="CHEBI:29105"/>
    </ligand>
</feature>
<feature type="binding site" evidence="1">
    <location>
        <position position="39"/>
    </location>
    <ligand>
        <name>Zn(2+)</name>
        <dbReference type="ChEBI" id="CHEBI:29105"/>
    </ligand>
</feature>
<organism>
    <name type="scientific">Alkaliphilus metalliredigens (strain QYMF)</name>
    <dbReference type="NCBI Taxonomy" id="293826"/>
    <lineage>
        <taxon>Bacteria</taxon>
        <taxon>Bacillati</taxon>
        <taxon>Bacillota</taxon>
        <taxon>Clostridia</taxon>
        <taxon>Peptostreptococcales</taxon>
        <taxon>Natronincolaceae</taxon>
        <taxon>Alkaliphilus</taxon>
    </lineage>
</organism>
<reference key="1">
    <citation type="journal article" date="2016" name="Genome Announc.">
        <title>Complete genome sequence of Alkaliphilus metalliredigens strain QYMF, an alkaliphilic and metal-reducing bacterium isolated from borax-contaminated leachate ponds.</title>
        <authorList>
            <person name="Hwang C."/>
            <person name="Copeland A."/>
            <person name="Lucas S."/>
            <person name="Lapidus A."/>
            <person name="Barry K."/>
            <person name="Detter J.C."/>
            <person name="Glavina Del Rio T."/>
            <person name="Hammon N."/>
            <person name="Israni S."/>
            <person name="Dalin E."/>
            <person name="Tice H."/>
            <person name="Pitluck S."/>
            <person name="Chertkov O."/>
            <person name="Brettin T."/>
            <person name="Bruce D."/>
            <person name="Han C."/>
            <person name="Schmutz J."/>
            <person name="Larimer F."/>
            <person name="Land M.L."/>
            <person name="Hauser L."/>
            <person name="Kyrpides N."/>
            <person name="Mikhailova N."/>
            <person name="Ye Q."/>
            <person name="Zhou J."/>
            <person name="Richardson P."/>
            <person name="Fields M.W."/>
        </authorList>
    </citation>
    <scope>NUCLEOTIDE SEQUENCE [LARGE SCALE GENOMIC DNA]</scope>
    <source>
        <strain>QYMF</strain>
    </source>
</reference>